<dbReference type="EC" id="2.5.1.-" evidence="1"/>
<dbReference type="EMBL" id="CP000323">
    <property type="protein sequence ID" value="ABE76018.1"/>
    <property type="molecule type" value="Genomic_DNA"/>
</dbReference>
<dbReference type="RefSeq" id="WP_011514551.1">
    <property type="nucleotide sequence ID" value="NC_007969.1"/>
</dbReference>
<dbReference type="SMR" id="Q1Q8I5"/>
<dbReference type="STRING" id="335284.Pcryo_2241"/>
<dbReference type="KEGG" id="pcr:Pcryo_2241"/>
<dbReference type="eggNOG" id="COG2227">
    <property type="taxonomic scope" value="Bacteria"/>
</dbReference>
<dbReference type="HOGENOM" id="CLU_052665_0_0_6"/>
<dbReference type="Proteomes" id="UP000002425">
    <property type="component" value="Chromosome"/>
</dbReference>
<dbReference type="GO" id="GO:0008168">
    <property type="term" value="F:methyltransferase activity"/>
    <property type="evidence" value="ECO:0007669"/>
    <property type="project" value="TreeGrafter"/>
</dbReference>
<dbReference type="GO" id="GO:0016765">
    <property type="term" value="F:transferase activity, transferring alkyl or aryl (other than methyl) groups"/>
    <property type="evidence" value="ECO:0007669"/>
    <property type="project" value="UniProtKB-UniRule"/>
</dbReference>
<dbReference type="GO" id="GO:0002098">
    <property type="term" value="P:tRNA wobble uridine modification"/>
    <property type="evidence" value="ECO:0007669"/>
    <property type="project" value="InterPro"/>
</dbReference>
<dbReference type="CDD" id="cd02440">
    <property type="entry name" value="AdoMet_MTases"/>
    <property type="match status" value="1"/>
</dbReference>
<dbReference type="Gene3D" id="3.40.50.150">
    <property type="entry name" value="Vaccinia Virus protein VP39"/>
    <property type="match status" value="1"/>
</dbReference>
<dbReference type="HAMAP" id="MF_01590">
    <property type="entry name" value="tRNA_carboxymethyltr_CmoB"/>
    <property type="match status" value="1"/>
</dbReference>
<dbReference type="InterPro" id="IPR010017">
    <property type="entry name" value="CmoB"/>
</dbReference>
<dbReference type="InterPro" id="IPR027555">
    <property type="entry name" value="Mo5U34_MeTrfas-like"/>
</dbReference>
<dbReference type="InterPro" id="IPR029063">
    <property type="entry name" value="SAM-dependent_MTases_sf"/>
</dbReference>
<dbReference type="NCBIfam" id="NF011650">
    <property type="entry name" value="PRK15068.1"/>
    <property type="match status" value="1"/>
</dbReference>
<dbReference type="NCBIfam" id="TIGR00452">
    <property type="entry name" value="tRNA 5-methoxyuridine(34)/uridine 5-oxyacetic acid(34) synthase CmoB"/>
    <property type="match status" value="1"/>
</dbReference>
<dbReference type="PANTHER" id="PTHR43464">
    <property type="entry name" value="METHYLTRANSFERASE"/>
    <property type="match status" value="1"/>
</dbReference>
<dbReference type="PANTHER" id="PTHR43464:SF95">
    <property type="entry name" value="TRNA U34 CARBOXYMETHYLTRANSFERASE"/>
    <property type="match status" value="1"/>
</dbReference>
<dbReference type="Pfam" id="PF08003">
    <property type="entry name" value="Methyltransf_9"/>
    <property type="match status" value="1"/>
</dbReference>
<dbReference type="SUPFAM" id="SSF53335">
    <property type="entry name" value="S-adenosyl-L-methionine-dependent methyltransferases"/>
    <property type="match status" value="1"/>
</dbReference>
<keyword id="KW-0808">Transferase</keyword>
<keyword id="KW-0819">tRNA processing</keyword>
<reference key="1">
    <citation type="submission" date="2006-03" db="EMBL/GenBank/DDBJ databases">
        <title>Complete sequence of chromosome of Psychrobacter cryohalolentis K5.</title>
        <authorList>
            <consortium name="US DOE Joint Genome Institute"/>
            <person name="Copeland A."/>
            <person name="Lucas S."/>
            <person name="Lapidus A."/>
            <person name="Barry K."/>
            <person name="Detter J.C."/>
            <person name="Glavina T."/>
            <person name="Hammon N."/>
            <person name="Israni S."/>
            <person name="Dalin E."/>
            <person name="Tice H."/>
            <person name="Pitluck S."/>
            <person name="Brettin T."/>
            <person name="Bruce D."/>
            <person name="Han C."/>
            <person name="Tapia R."/>
            <person name="Sims D.R."/>
            <person name="Gilna P."/>
            <person name="Schmutz J."/>
            <person name="Larimer F."/>
            <person name="Land M."/>
            <person name="Hauser L."/>
            <person name="Kyrpides N."/>
            <person name="Kim E."/>
            <person name="Richardson P."/>
        </authorList>
    </citation>
    <scope>NUCLEOTIDE SEQUENCE [LARGE SCALE GENOMIC DNA]</scope>
    <source>
        <strain>ATCC BAA-1226 / DSM 17306 / VKM B-2378 / K5</strain>
    </source>
</reference>
<proteinExistence type="inferred from homology"/>
<protein>
    <recommendedName>
        <fullName evidence="1">tRNA U34 carboxymethyltransferase</fullName>
        <ecNumber evidence="1">2.5.1.-</ecNumber>
    </recommendedName>
</protein>
<sequence length="363" mass="40909">MLNDTITHAERELYLTLLELAQQQPSAYEWLTRLPTWLNDIKDKANYAHAPAYQASVARLPNLTVNNVDLNSDVLTIEANLSESQRKQTMALLKQLMPWRKGPFQIGGQISSRQTVDTQDNSDTNAPILIDTEWHSDWKWQRVAPHLGNLKGRRVLDVGGGSGYHGWRMAGSGADTVIIIDPSCLFYHQFMAIRHFVGSADAHTYTHGTGRYRTHYIPVPLEALPEHSQLFDTVFSMGVLYHRQSPFEHLQQLKGQLVKGGELVLETLVIEGDANTVLVPHDRYAQMNNVYFLPSVAALIGWLEKAGFTEVRCVDVAVTSTEEQRKTEWMTYHSLADFLDPNDSSKTLEGYPAPLRATLIAKK</sequence>
<organism>
    <name type="scientific">Psychrobacter cryohalolentis (strain ATCC BAA-1226 / DSM 17306 / VKM B-2378 / K5)</name>
    <dbReference type="NCBI Taxonomy" id="335284"/>
    <lineage>
        <taxon>Bacteria</taxon>
        <taxon>Pseudomonadati</taxon>
        <taxon>Pseudomonadota</taxon>
        <taxon>Gammaproteobacteria</taxon>
        <taxon>Moraxellales</taxon>
        <taxon>Moraxellaceae</taxon>
        <taxon>Psychrobacter</taxon>
    </lineage>
</organism>
<accession>Q1Q8I5</accession>
<evidence type="ECO:0000255" key="1">
    <source>
        <dbReference type="HAMAP-Rule" id="MF_01590"/>
    </source>
</evidence>
<comment type="function">
    <text evidence="1">Catalyzes carboxymethyl transfer from carboxy-S-adenosyl-L-methionine (Cx-SAM) to 5-hydroxyuridine (ho5U) to form 5-carboxymethoxyuridine (cmo5U) at position 34 in tRNAs.</text>
</comment>
<comment type="catalytic activity">
    <reaction evidence="1">
        <text>carboxy-S-adenosyl-L-methionine + 5-hydroxyuridine(34) in tRNA = 5-carboxymethoxyuridine(34) in tRNA + S-adenosyl-L-homocysteine + H(+)</text>
        <dbReference type="Rhea" id="RHEA:52848"/>
        <dbReference type="Rhea" id="RHEA-COMP:13381"/>
        <dbReference type="Rhea" id="RHEA-COMP:13383"/>
        <dbReference type="ChEBI" id="CHEBI:15378"/>
        <dbReference type="ChEBI" id="CHEBI:57856"/>
        <dbReference type="ChEBI" id="CHEBI:134278"/>
        <dbReference type="ChEBI" id="CHEBI:136877"/>
        <dbReference type="ChEBI" id="CHEBI:136879"/>
    </reaction>
</comment>
<comment type="subunit">
    <text evidence="1">Homotetramer.</text>
</comment>
<comment type="similarity">
    <text evidence="1">Belongs to the class I-like SAM-binding methyltransferase superfamily. CmoB family.</text>
</comment>
<feature type="chain" id="PRO_0000313955" description="tRNA U34 carboxymethyltransferase">
    <location>
        <begin position="1"/>
        <end position="363"/>
    </location>
</feature>
<feature type="binding site" evidence="1">
    <location>
        <position position="101"/>
    </location>
    <ligand>
        <name>carboxy-S-adenosyl-L-methionine</name>
        <dbReference type="ChEBI" id="CHEBI:134278"/>
    </ligand>
</feature>
<feature type="binding site" evidence="1">
    <location>
        <position position="134"/>
    </location>
    <ligand>
        <name>carboxy-S-adenosyl-L-methionine</name>
        <dbReference type="ChEBI" id="CHEBI:134278"/>
    </ligand>
</feature>
<feature type="binding site" evidence="1">
    <location>
        <position position="139"/>
    </location>
    <ligand>
        <name>carboxy-S-adenosyl-L-methionine</name>
        <dbReference type="ChEBI" id="CHEBI:134278"/>
    </ligand>
</feature>
<feature type="binding site" evidence="1">
    <location>
        <position position="159"/>
    </location>
    <ligand>
        <name>carboxy-S-adenosyl-L-methionine</name>
        <dbReference type="ChEBI" id="CHEBI:134278"/>
    </ligand>
</feature>
<feature type="binding site" evidence="1">
    <location>
        <begin position="181"/>
        <end position="183"/>
    </location>
    <ligand>
        <name>carboxy-S-adenosyl-L-methionine</name>
        <dbReference type="ChEBI" id="CHEBI:134278"/>
    </ligand>
</feature>
<feature type="binding site" evidence="1">
    <location>
        <begin position="221"/>
        <end position="222"/>
    </location>
    <ligand>
        <name>carboxy-S-adenosyl-L-methionine</name>
        <dbReference type="ChEBI" id="CHEBI:134278"/>
    </ligand>
</feature>
<feature type="binding site" evidence="1">
    <location>
        <position position="237"/>
    </location>
    <ligand>
        <name>carboxy-S-adenosyl-L-methionine</name>
        <dbReference type="ChEBI" id="CHEBI:134278"/>
    </ligand>
</feature>
<feature type="binding site" evidence="1">
    <location>
        <position position="241"/>
    </location>
    <ligand>
        <name>carboxy-S-adenosyl-L-methionine</name>
        <dbReference type="ChEBI" id="CHEBI:134278"/>
    </ligand>
</feature>
<feature type="binding site" evidence="1">
    <location>
        <position position="356"/>
    </location>
    <ligand>
        <name>carboxy-S-adenosyl-L-methionine</name>
        <dbReference type="ChEBI" id="CHEBI:134278"/>
    </ligand>
</feature>
<gene>
    <name evidence="1" type="primary">cmoB</name>
    <name type="ordered locus">Pcryo_2241</name>
</gene>
<name>CMOB_PSYCK</name>